<keyword id="KW-0008">Acetylcholine receptor inhibiting toxin</keyword>
<keyword id="KW-0025">Alternative splicing</keyword>
<keyword id="KW-1015">Disulfide bond</keyword>
<keyword id="KW-0872">Ion channel impairing toxin</keyword>
<keyword id="KW-0528">Neurotoxin</keyword>
<keyword id="KW-0629">Postsynaptic neurotoxin</keyword>
<keyword id="KW-1185">Reference proteome</keyword>
<keyword id="KW-0964">Secreted</keyword>
<keyword id="KW-0732">Signal</keyword>
<keyword id="KW-0800">Toxin</keyword>
<reference key="1">
    <citation type="journal article" date="1999" name="Eur. J. Biochem.">
        <title>Postsynaptic short-chain neurotoxins from Pseudonaja textilis: cDNA cloning, expression and protein characterization.</title>
        <authorList>
            <person name="Gong N.L."/>
            <person name="Armugam A."/>
            <person name="Jeyaseelan K."/>
        </authorList>
    </citation>
    <scope>NUCLEOTIDE SEQUENCE [MRNA] (ISOFORMS SNTX1 AND SNTX5)</scope>
    <scope>FUNCTION</scope>
    <scope>TOXIC DOSE</scope>
    <source>
        <tissue>Venom gland</tissue>
    </source>
</reference>
<reference key="2">
    <citation type="journal article" date="2000" name="FEBS Lett.">
        <title>Molecular cloning, characterization and evolution of the genes encoding a new group of short-chain alpha-neurotoxins in an Australian elapid, Pseudonaja textilis.</title>
        <authorList>
            <person name="Gong N.L."/>
            <person name="Armugam A."/>
            <person name="Jeyaseelan K."/>
        </authorList>
    </citation>
    <scope>NUCLEOTIDE SEQUENCE [GENOMIC DNA] (ISOFORMS SNTX1 AND SNTX5)</scope>
    <source>
        <tissue>Liver</tissue>
    </source>
</reference>
<comment type="function">
    <text evidence="3">Binds with high affinity to muscle nicotinic acetylcholine receptor (nAChR) and inhibit acetylcholine from binding to the receptor, thereby impairing neuromuscular transmission. Compete with the binding of alpha-bungarotoxin on muscle AChR (from Torpedo) with an IC(50) of 0.31 uM (SNTX1) and 3.1 uM (SNTX5). Is able of exerting muscle paralysis, spasms and increased respiration.</text>
</comment>
<comment type="subcellular location">
    <subcellularLocation>
        <location evidence="1">Secreted</location>
    </subcellularLocation>
</comment>
<comment type="alternative products">
    <event type="alternative splicing"/>
    <isoform>
        <id>Q9W7K2-1</id>
        <name>SNTX1</name>
        <sequence type="displayed"/>
    </isoform>
    <isoform>
        <id>Q9W7K2-2</id>
        <name>SNTX5</name>
        <sequence type="described" ref="VSP_006534"/>
    </isoform>
</comment>
<comment type="tissue specificity">
    <text evidence="5">Expressed by the venom gland.</text>
</comment>
<comment type="toxic dose">
    <text evidence="3">LD(50) is 1 mg/kg by intravenous injection into mice.</text>
</comment>
<comment type="similarity">
    <text evidence="5">Belongs to the three-finger toxin family. Short-chain subfamily. Type III alpha-neurotoxin sub-subfamily.</text>
</comment>
<accession>Q9W7K2</accession>
<accession>Q9W7J8</accession>
<evidence type="ECO:0000250" key="1"/>
<evidence type="ECO:0000250" key="2">
    <source>
        <dbReference type="UniProtKB" id="P60301"/>
    </source>
</evidence>
<evidence type="ECO:0000269" key="3">
    <source>
    </source>
</evidence>
<evidence type="ECO:0000303" key="4">
    <source>
    </source>
</evidence>
<evidence type="ECO:0000305" key="5"/>
<feature type="signal peptide" evidence="1">
    <location>
        <begin position="1"/>
        <end position="21"/>
    </location>
</feature>
<feature type="chain" id="PRO_0000035461" description="Short neurotoxin 1/5">
    <location>
        <begin position="22"/>
        <end position="79"/>
    </location>
</feature>
<feature type="disulfide bond" evidence="2">
    <location>
        <begin position="24"/>
        <end position="41"/>
    </location>
</feature>
<feature type="disulfide bond" evidence="2">
    <location>
        <begin position="34"/>
        <end position="59"/>
    </location>
</feature>
<feature type="disulfide bond" evidence="2">
    <location>
        <begin position="63"/>
        <end position="71"/>
    </location>
</feature>
<feature type="disulfide bond" evidence="2">
    <location>
        <begin position="72"/>
        <end position="77"/>
    </location>
</feature>
<feature type="splice variant" id="VSP_006534" description="In isoform SNTX5." evidence="4">
    <original>GN</original>
    <variation>D</variation>
    <location>
        <begin position="51"/>
        <end position="52"/>
    </location>
</feature>
<feature type="sequence conflict" description="In Ref. 1; AAD40971." evidence="5" ref="1">
    <original>R</original>
    <variation>T</variation>
    <location>
        <position position="73"/>
    </location>
</feature>
<name>3S31_PSETE</name>
<protein>
    <recommendedName>
        <fullName>Short neurotoxin 1/5</fullName>
        <shortName>SNTX1</shortName>
        <shortName>SNTX5</shortName>
    </recommendedName>
    <alternativeName>
        <fullName>Alpha-neurotoxin 1/5</fullName>
    </alternativeName>
</protein>
<sequence length="79" mass="8706">MKTLLLTLVMVTIMCLDLGYTLTCYKGYHDTVVCKPHETICYEYFIPATHGNAILARGCGTSCPGGIRPVCCRTDLCNK</sequence>
<proteinExistence type="inferred from homology"/>
<dbReference type="EMBL" id="AF082975">
    <property type="protein sequence ID" value="AAD40967.1"/>
    <property type="molecule type" value="mRNA"/>
</dbReference>
<dbReference type="EMBL" id="AF082979">
    <property type="protein sequence ID" value="AAD40971.1"/>
    <property type="molecule type" value="mRNA"/>
</dbReference>
<dbReference type="EMBL" id="AF204969">
    <property type="protein sequence ID" value="AAF75220.1"/>
    <property type="molecule type" value="Genomic_DNA"/>
</dbReference>
<dbReference type="SMR" id="Q9W7K2"/>
<dbReference type="Proteomes" id="UP000472273">
    <property type="component" value="Unplaced"/>
</dbReference>
<dbReference type="GO" id="GO:0005576">
    <property type="term" value="C:extracellular region"/>
    <property type="evidence" value="ECO:0007669"/>
    <property type="project" value="UniProtKB-SubCell"/>
</dbReference>
<dbReference type="GO" id="GO:0030550">
    <property type="term" value="F:acetylcholine receptor inhibitor activity"/>
    <property type="evidence" value="ECO:0007669"/>
    <property type="project" value="UniProtKB-KW"/>
</dbReference>
<dbReference type="GO" id="GO:0099106">
    <property type="term" value="F:ion channel regulator activity"/>
    <property type="evidence" value="ECO:0007669"/>
    <property type="project" value="UniProtKB-KW"/>
</dbReference>
<dbReference type="GO" id="GO:0090729">
    <property type="term" value="F:toxin activity"/>
    <property type="evidence" value="ECO:0007669"/>
    <property type="project" value="UniProtKB-KW"/>
</dbReference>
<dbReference type="CDD" id="cd00206">
    <property type="entry name" value="TFP_snake_toxin"/>
    <property type="match status" value="1"/>
</dbReference>
<dbReference type="Gene3D" id="2.10.60.10">
    <property type="entry name" value="CD59"/>
    <property type="match status" value="1"/>
</dbReference>
<dbReference type="InterPro" id="IPR003571">
    <property type="entry name" value="Snake_3FTx"/>
</dbReference>
<dbReference type="InterPro" id="IPR045860">
    <property type="entry name" value="Snake_toxin-like_sf"/>
</dbReference>
<dbReference type="InterPro" id="IPR054131">
    <property type="entry name" value="Toxin_cobra-type"/>
</dbReference>
<dbReference type="Pfam" id="PF21947">
    <property type="entry name" value="Toxin_cobra-type"/>
    <property type="match status" value="1"/>
</dbReference>
<dbReference type="SUPFAM" id="SSF57302">
    <property type="entry name" value="Snake toxin-like"/>
    <property type="match status" value="1"/>
</dbReference>
<organism>
    <name type="scientific">Pseudonaja textilis</name>
    <name type="common">Eastern brown snake</name>
    <dbReference type="NCBI Taxonomy" id="8673"/>
    <lineage>
        <taxon>Eukaryota</taxon>
        <taxon>Metazoa</taxon>
        <taxon>Chordata</taxon>
        <taxon>Craniata</taxon>
        <taxon>Vertebrata</taxon>
        <taxon>Euteleostomi</taxon>
        <taxon>Lepidosauria</taxon>
        <taxon>Squamata</taxon>
        <taxon>Bifurcata</taxon>
        <taxon>Unidentata</taxon>
        <taxon>Episquamata</taxon>
        <taxon>Toxicofera</taxon>
        <taxon>Serpentes</taxon>
        <taxon>Colubroidea</taxon>
        <taxon>Elapidae</taxon>
        <taxon>Hydrophiinae</taxon>
        <taxon>Pseudonaja</taxon>
    </lineage>
</organism>